<geneLocation type="mitochondrion"/>
<accession>P14570</accession>
<feature type="chain" id="PRO_0000195544" description="ATP synthase protein 8">
    <location>
        <begin position="1"/>
        <end position="52"/>
    </location>
</feature>
<feature type="transmembrane region" description="Helical" evidence="2">
    <location>
        <begin position="7"/>
        <end position="23"/>
    </location>
</feature>
<comment type="function">
    <text evidence="1">Mitochondrial membrane ATP synthase (F(1)F(0) ATP synthase or Complex V) produces ATP from ADP in the presence of a proton gradient across the membrane which is generated by electron transport complexes of the respiratory chain. F-type ATPases consist of two structural domains, F(1) - containing the extramembraneous catalytic core and F(0) - containing the membrane proton channel, linked together by a central stalk and a peripheral stalk. During catalysis, ATP synthesis in the catalytic domain of F(1) is coupled via a rotary mechanism of the central stalk subunits to proton translocation. Part of the complex F(0) domain. Minor subunit located with subunit a in the membrane (By similarity).</text>
</comment>
<comment type="subunit">
    <text evidence="1">F-type ATPases have 2 components, CF(1) - the catalytic core - and CF(0) - the membrane proton channel.</text>
</comment>
<comment type="subcellular location">
    <subcellularLocation>
        <location>Mitochondrion membrane</location>
        <topology>Single-pass membrane protein</topology>
    </subcellularLocation>
</comment>
<comment type="similarity">
    <text evidence="3">Belongs to the ATPase protein 8 family.</text>
</comment>
<comment type="sequence caution" evidence="3">
    <conflict type="erroneous initiation">
        <sequence resource="EMBL-CDS" id="CAA32154"/>
    </conflict>
    <text>Extended N-terminus.</text>
</comment>
<sequence>MPQMSPMMWFSLFIMFSMTMMLFNQLNFFSYKPNKIMSSNNKIKKKNINWMW</sequence>
<organism>
    <name type="scientific">Locusta migratoria</name>
    <name type="common">Migratory locust</name>
    <dbReference type="NCBI Taxonomy" id="7004"/>
    <lineage>
        <taxon>Eukaryota</taxon>
        <taxon>Metazoa</taxon>
        <taxon>Ecdysozoa</taxon>
        <taxon>Arthropoda</taxon>
        <taxon>Hexapoda</taxon>
        <taxon>Insecta</taxon>
        <taxon>Pterygota</taxon>
        <taxon>Neoptera</taxon>
        <taxon>Polyneoptera</taxon>
        <taxon>Orthoptera</taxon>
        <taxon>Caelifera</taxon>
        <taxon>Acrididea</taxon>
        <taxon>Acridomorpha</taxon>
        <taxon>Acridoidea</taxon>
        <taxon>Acrididae</taxon>
        <taxon>Oedipodinae</taxon>
        <taxon>Locusta</taxon>
    </lineage>
</organism>
<proteinExistence type="inferred from homology"/>
<gene>
    <name type="primary">MT-ATP8</name>
    <name type="synonym">ATP8</name>
    <name type="synonym">ATPASE8</name>
    <name type="synonym">MTATP8</name>
</gene>
<reference key="1">
    <citation type="journal article" date="1988" name="Curr. Genet.">
        <title>Different mitochondrial gene orders among insects: exchanged tRNA gene positions in the COII/COIII region between an orthopteran and a dipteran species.</title>
        <authorList>
            <person name="Haucke H.R."/>
            <person name="Gellissen G."/>
        </authorList>
    </citation>
    <scope>NUCLEOTIDE SEQUENCE [GENOMIC DNA]</scope>
</reference>
<reference key="2">
    <citation type="journal article" date="1995" name="J. Mol. Evol.">
        <title>The sequence, organization, and evolution of the Locusta migratoria mitochondrial genome.</title>
        <authorList>
            <person name="Flook P.K."/>
            <person name="Rowell C.H.F."/>
            <person name="Gellissen G."/>
        </authorList>
    </citation>
    <scope>NUCLEOTIDE SEQUENCE [GENOMIC DNA]</scope>
</reference>
<name>ATP8_LOCMI</name>
<protein>
    <recommendedName>
        <fullName>ATP synthase protein 8</fullName>
    </recommendedName>
    <alternativeName>
        <fullName>A6L</fullName>
    </alternativeName>
    <alternativeName>
        <fullName>F-ATPase subunit 8</fullName>
    </alternativeName>
</protein>
<keyword id="KW-0066">ATP synthesis</keyword>
<keyword id="KW-0138">CF(0)</keyword>
<keyword id="KW-0375">Hydrogen ion transport</keyword>
<keyword id="KW-0406">Ion transport</keyword>
<keyword id="KW-0472">Membrane</keyword>
<keyword id="KW-0496">Mitochondrion</keyword>
<keyword id="KW-0812">Transmembrane</keyword>
<keyword id="KW-1133">Transmembrane helix</keyword>
<keyword id="KW-0813">Transport</keyword>
<evidence type="ECO:0000250" key="1"/>
<evidence type="ECO:0000255" key="2"/>
<evidence type="ECO:0000305" key="3"/>
<dbReference type="EMBL" id="X13975">
    <property type="protein sequence ID" value="CAA32154.1"/>
    <property type="status" value="ALT_INIT"/>
    <property type="molecule type" value="Genomic_DNA"/>
</dbReference>
<dbReference type="EMBL" id="X80245">
    <property type="protein sequence ID" value="CAA56533.1"/>
    <property type="molecule type" value="Genomic_DNA"/>
</dbReference>
<dbReference type="PIR" id="T11473">
    <property type="entry name" value="T11473"/>
</dbReference>
<dbReference type="RefSeq" id="NP_007293.1">
    <property type="nucleotide sequence ID" value="NC_001712.1"/>
</dbReference>
<dbReference type="GeneID" id="807956"/>
<dbReference type="CTD" id="4509"/>
<dbReference type="GO" id="GO:0031966">
    <property type="term" value="C:mitochondrial membrane"/>
    <property type="evidence" value="ECO:0007669"/>
    <property type="project" value="UniProtKB-SubCell"/>
</dbReference>
<dbReference type="GO" id="GO:0045259">
    <property type="term" value="C:proton-transporting ATP synthase complex"/>
    <property type="evidence" value="ECO:0007669"/>
    <property type="project" value="UniProtKB-KW"/>
</dbReference>
<dbReference type="GO" id="GO:0015078">
    <property type="term" value="F:proton transmembrane transporter activity"/>
    <property type="evidence" value="ECO:0007669"/>
    <property type="project" value="InterPro"/>
</dbReference>
<dbReference type="GO" id="GO:0015986">
    <property type="term" value="P:proton motive force-driven ATP synthesis"/>
    <property type="evidence" value="ECO:0007669"/>
    <property type="project" value="InterPro"/>
</dbReference>
<dbReference type="InterPro" id="IPR001421">
    <property type="entry name" value="ATP8_metazoa"/>
</dbReference>
<dbReference type="Pfam" id="PF00895">
    <property type="entry name" value="ATP-synt_8"/>
    <property type="match status" value="1"/>
</dbReference>